<organism>
    <name type="scientific">Schizosaccharomyces pombe (strain 972 / ATCC 24843)</name>
    <name type="common">Fission yeast</name>
    <dbReference type="NCBI Taxonomy" id="284812"/>
    <lineage>
        <taxon>Eukaryota</taxon>
        <taxon>Fungi</taxon>
        <taxon>Dikarya</taxon>
        <taxon>Ascomycota</taxon>
        <taxon>Taphrinomycotina</taxon>
        <taxon>Schizosaccharomycetes</taxon>
        <taxon>Schizosaccharomycetales</taxon>
        <taxon>Schizosaccharomycetaceae</taxon>
        <taxon>Schizosaccharomyces</taxon>
    </lineage>
</organism>
<sequence length="1039" mass="119151">MEGFTLETHASRIIEVPLLGQEDQSVEIDCSSLPSDATELCEILVNEQAPREFWTKFAHEYYIRGLREQAILILKSGLETLKDSESLCILNANIAAIYLSMAREAMLKKDTDLRDEQLRNVRTYLEAANNIDSKSEINVLLHGIYRILLNPTDKESLENAARCFDFVLQKSGGNILGFLGKARILYAKGNYRSALKLYQRALVSNPQFKPDPRIGIGLCFWNLDMKTDALSAWTRVQQLDPKNTVVDTYIGLYYYDLAFQNVNNDSFVQNYGKALQHIQRAFKTRNNDPVASSILERYVYSKKNYEGCIKLAENVIQNSFSSSLIADGYYWMGRAYHQMGNNEKAMASYQKAKAADDRHLLSSVGIGQIQILQNDLTSAKLTFERIAEQNQSCFEALVVLGCLHASDSKPDLTKARMLLDRAFNLVGSSKLPRVVDSDLYITQARLWEKEDTKKSLGFLTRALDFLESAHMSVGPELLNNIAVLQYHLGLIPEAHGNIIKAKSVLPDANPELSLLLDYNLARCEEELGNTSVASEAYVSILEKHPSFIDARIRKCLLQLSNPNEETFKEIRHIMNADSQNLEVRAFFGWYLSKQKRRPVEDPEVRHCSQTLRHWHDDIYSLVQLGNAYMRQAREFRVHNDREKLKRQKLYIKAIQSYDQAIKFDPKNAHAAQGIAIILAQNRQFSKALLILSKVREAIKDATTLINIGNCLAELKQFSRAIEVFETVYSSTGESDTYGVLSCLGRVWLQRGRESKNVDYLKESVRYATLALEKNPENPSLLFNVAFVQFQLCELIRQKPENSRTVEDLNFAMQQLDASIETFTKLVSVEHPPYSPTSIEQRAKMAKNTTKRQLERAIQAQIEYEKSVAAKLEDARIQREKEKARRLAEEEALLKEKQERERQLQEERQKMQEEVLEWRKSQQKASEDDMSLSDDEEKQSGKKKKKDRKKRKSKSKQESSDSGVSEDDEIPLSDARNKTKKRRVNRRVISEEYTFDQDSDAEGNQEEEVSRTIEEKQDNDITDNQDDNKELNLFSEEDEE</sequence>
<dbReference type="EMBL" id="AF047464">
    <property type="protein sequence ID" value="AAC03120.1"/>
    <property type="molecule type" value="mRNA"/>
</dbReference>
<dbReference type="EMBL" id="CU329670">
    <property type="protein sequence ID" value="CAA15833.1"/>
    <property type="molecule type" value="Genomic_DNA"/>
</dbReference>
<dbReference type="PIR" id="T38447">
    <property type="entry name" value="T38447"/>
</dbReference>
<dbReference type="PIR" id="T43678">
    <property type="entry name" value="T43678"/>
</dbReference>
<dbReference type="RefSeq" id="NP_594620.1">
    <property type="nucleotide sequence ID" value="NM_001020048.2"/>
</dbReference>
<dbReference type="SMR" id="O42668"/>
<dbReference type="BioGRID" id="278554">
    <property type="interactions" value="18"/>
</dbReference>
<dbReference type="FunCoup" id="O42668">
    <property type="interactions" value="581"/>
</dbReference>
<dbReference type="STRING" id="284812.O42668"/>
<dbReference type="TCDB" id="8.A.13.1.1">
    <property type="family name" value="the tetratricopeptide repeat (tpr1) family"/>
</dbReference>
<dbReference type="iPTMnet" id="O42668"/>
<dbReference type="PaxDb" id="4896-SPAC27D7.14c.1"/>
<dbReference type="EnsemblFungi" id="SPAC27D7.14c.1">
    <property type="protein sequence ID" value="SPAC27D7.14c.1:pep"/>
    <property type="gene ID" value="SPAC27D7.14c"/>
</dbReference>
<dbReference type="GeneID" id="2542077"/>
<dbReference type="KEGG" id="spo:2542077"/>
<dbReference type="PomBase" id="SPAC27D7.14c">
    <property type="gene designation" value="tpr1"/>
</dbReference>
<dbReference type="VEuPathDB" id="FungiDB:SPAC27D7.14c"/>
<dbReference type="eggNOG" id="KOG2002">
    <property type="taxonomic scope" value="Eukaryota"/>
</dbReference>
<dbReference type="HOGENOM" id="CLU_003008_0_1_1"/>
<dbReference type="InParanoid" id="O42668"/>
<dbReference type="OMA" id="EHWLTIA"/>
<dbReference type="PhylomeDB" id="O42668"/>
<dbReference type="PRO" id="PR:O42668"/>
<dbReference type="Proteomes" id="UP000002485">
    <property type="component" value="Chromosome I"/>
</dbReference>
<dbReference type="GO" id="GO:0016593">
    <property type="term" value="C:Cdc73/Paf1 complex"/>
    <property type="evidence" value="ECO:0000353"/>
    <property type="project" value="PomBase"/>
</dbReference>
<dbReference type="GO" id="GO:0005634">
    <property type="term" value="C:nucleus"/>
    <property type="evidence" value="ECO:0007005"/>
    <property type="project" value="PomBase"/>
</dbReference>
<dbReference type="GO" id="GO:0000993">
    <property type="term" value="F:RNA polymerase II complex binding"/>
    <property type="evidence" value="ECO:0000318"/>
    <property type="project" value="GO_Central"/>
</dbReference>
<dbReference type="GO" id="GO:0006813">
    <property type="term" value="P:potassium ion transport"/>
    <property type="evidence" value="ECO:0007669"/>
    <property type="project" value="UniProtKB-KW"/>
</dbReference>
<dbReference type="GO" id="GO:0006355">
    <property type="term" value="P:regulation of DNA-templated transcription"/>
    <property type="evidence" value="ECO:0007669"/>
    <property type="project" value="InterPro"/>
</dbReference>
<dbReference type="GO" id="GO:0006362">
    <property type="term" value="P:transcription elongation by RNA polymerase I"/>
    <property type="evidence" value="ECO:0000250"/>
    <property type="project" value="PomBase"/>
</dbReference>
<dbReference type="GO" id="GO:0006368">
    <property type="term" value="P:transcription elongation by RNA polymerase II"/>
    <property type="evidence" value="ECO:0000250"/>
    <property type="project" value="PomBase"/>
</dbReference>
<dbReference type="FunFam" id="1.25.40.10:FF:002611">
    <property type="entry name" value="Tetratricopeptide repeat protein 1"/>
    <property type="match status" value="1"/>
</dbReference>
<dbReference type="Gene3D" id="1.25.40.10">
    <property type="entry name" value="Tetratricopeptide repeat domain"/>
    <property type="match status" value="5"/>
</dbReference>
<dbReference type="InterPro" id="IPR031101">
    <property type="entry name" value="Ctr9"/>
</dbReference>
<dbReference type="InterPro" id="IPR036305">
    <property type="entry name" value="RGS_sf"/>
</dbReference>
<dbReference type="InterPro" id="IPR011990">
    <property type="entry name" value="TPR-like_helical_dom_sf"/>
</dbReference>
<dbReference type="InterPro" id="IPR019734">
    <property type="entry name" value="TPR_rpt"/>
</dbReference>
<dbReference type="PANTHER" id="PTHR14027">
    <property type="entry name" value="RNA POLYMERASE-ASSOCIATED PROTEIN CTR9"/>
    <property type="match status" value="1"/>
</dbReference>
<dbReference type="PANTHER" id="PTHR14027:SF2">
    <property type="entry name" value="RNA POLYMERASE-ASSOCIATED PROTEIN CTR9 HOMOLOG"/>
    <property type="match status" value="1"/>
</dbReference>
<dbReference type="Pfam" id="PF13432">
    <property type="entry name" value="TPR_16"/>
    <property type="match status" value="1"/>
</dbReference>
<dbReference type="Pfam" id="PF13181">
    <property type="entry name" value="TPR_8"/>
    <property type="match status" value="1"/>
</dbReference>
<dbReference type="SMART" id="SM00028">
    <property type="entry name" value="TPR"/>
    <property type="match status" value="10"/>
</dbReference>
<dbReference type="SUPFAM" id="SSF81901">
    <property type="entry name" value="HCP-like"/>
    <property type="match status" value="1"/>
</dbReference>
<dbReference type="SUPFAM" id="SSF48097">
    <property type="entry name" value="Regulator of G-protein signaling, RGS"/>
    <property type="match status" value="1"/>
</dbReference>
<dbReference type="SUPFAM" id="SSF48452">
    <property type="entry name" value="TPR-like"/>
    <property type="match status" value="3"/>
</dbReference>
<dbReference type="PROSITE" id="PS50005">
    <property type="entry name" value="TPR"/>
    <property type="match status" value="6"/>
</dbReference>
<dbReference type="PROSITE" id="PS50293">
    <property type="entry name" value="TPR_REGION"/>
    <property type="match status" value="3"/>
</dbReference>
<feature type="chain" id="PRO_0000106375" description="Tetratricopeptide repeat protein 1">
    <location>
        <begin position="1"/>
        <end position="1039"/>
    </location>
</feature>
<feature type="repeat" description="TPR 1">
    <location>
        <begin position="51"/>
        <end position="84"/>
    </location>
</feature>
<feature type="repeat" description="TPR 2">
    <location>
        <begin position="175"/>
        <end position="208"/>
    </location>
</feature>
<feature type="repeat" description="TPR 3">
    <location>
        <begin position="210"/>
        <end position="243"/>
    </location>
</feature>
<feature type="repeat" description="TPR 4">
    <location>
        <begin position="251"/>
        <end position="288"/>
    </location>
</feature>
<feature type="repeat" description="TPR 5">
    <location>
        <begin position="326"/>
        <end position="359"/>
    </location>
</feature>
<feature type="repeat" description="TPR 6">
    <location>
        <begin position="361"/>
        <end position="393"/>
    </location>
</feature>
<feature type="repeat" description="TPR 7">
    <location>
        <begin position="437"/>
        <end position="469"/>
    </location>
</feature>
<feature type="repeat" description="TPR 8">
    <location>
        <begin position="514"/>
        <end position="547"/>
    </location>
</feature>
<feature type="repeat" description="TPR 9">
    <location>
        <begin position="634"/>
        <end position="667"/>
    </location>
</feature>
<feature type="repeat" description="TPR 10">
    <location>
        <begin position="701"/>
        <end position="734"/>
    </location>
</feature>
<feature type="repeat" description="TPR 11">
    <location>
        <begin position="737"/>
        <end position="770"/>
    </location>
</feature>
<feature type="repeat" description="TPR 12">
    <location>
        <begin position="799"/>
        <end position="832"/>
    </location>
</feature>
<feature type="region of interest" description="Disordered" evidence="2">
    <location>
        <begin position="912"/>
        <end position="1039"/>
    </location>
</feature>
<feature type="coiled-coil region" evidence="1">
    <location>
        <begin position="838"/>
        <end position="929"/>
    </location>
</feature>
<feature type="compositionally biased region" description="Acidic residues" evidence="2">
    <location>
        <begin position="927"/>
        <end position="936"/>
    </location>
</feature>
<feature type="compositionally biased region" description="Basic residues" evidence="2">
    <location>
        <begin position="940"/>
        <end position="953"/>
    </location>
</feature>
<feature type="compositionally biased region" description="Acidic residues" evidence="2">
    <location>
        <begin position="992"/>
        <end position="1006"/>
    </location>
</feature>
<feature type="compositionally biased region" description="Basic and acidic residues" evidence="2">
    <location>
        <begin position="1007"/>
        <end position="1018"/>
    </location>
</feature>
<feature type="modified residue" description="Phosphoserine" evidence="4">
    <location>
        <position position="930"/>
    </location>
</feature>
<feature type="modified residue" description="Phosphoserine" evidence="4">
    <location>
        <position position="932"/>
    </location>
</feature>
<feature type="modified residue" description="Phosphoserine" evidence="4">
    <location>
        <position position="959"/>
    </location>
</feature>
<feature type="modified residue" description="Phosphoserine" evidence="4">
    <location>
        <position position="961"/>
    </location>
</feature>
<feature type="modified residue" description="Phosphoserine" evidence="4">
    <location>
        <position position="964"/>
    </location>
</feature>
<feature type="modified residue" description="Phosphoserine" evidence="4">
    <location>
        <position position="998"/>
    </location>
</feature>
<feature type="sequence conflict" description="In Ref. 1; AAC03120." evidence="5" ref="1">
    <original>YLEA</original>
    <variation>NLGG</variation>
    <location>
        <begin position="124"/>
        <end position="127"/>
    </location>
</feature>
<feature type="sequence conflict" description="In Ref. 1; AAC03120." evidence="5" ref="1">
    <original>LK</original>
    <variation>FR</variation>
    <location>
        <begin position="195"/>
        <end position="196"/>
    </location>
</feature>
<name>TPR1_SCHPO</name>
<comment type="function">
    <text evidence="3">Involved in promoting potassiumm ion uptake.</text>
</comment>
<gene>
    <name type="primary">tpr1</name>
    <name type="ORF">SPAC27D7.14c</name>
    <name type="ORF">SPAC637.02c</name>
</gene>
<accession>O42668</accession>
<accession>O42796</accession>
<reference key="1">
    <citation type="journal article" date="1999" name="FEBS Lett.">
        <title>Tpr1, a Schizosaccharomyces pombe protein involved in potassium transport.</title>
        <authorList>
            <person name="Lichtenberg H."/>
            <person name="Heyer M."/>
            <person name="Hoefer M."/>
        </authorList>
    </citation>
    <scope>NUCLEOTIDE SEQUENCE [MRNA]</scope>
    <scope>FUNCTION</scope>
    <source>
        <strain>972 / ATCC 24843</strain>
    </source>
</reference>
<reference key="2">
    <citation type="journal article" date="2002" name="Nature">
        <title>The genome sequence of Schizosaccharomyces pombe.</title>
        <authorList>
            <person name="Wood V."/>
            <person name="Gwilliam R."/>
            <person name="Rajandream M.A."/>
            <person name="Lyne M.H."/>
            <person name="Lyne R."/>
            <person name="Stewart A."/>
            <person name="Sgouros J.G."/>
            <person name="Peat N."/>
            <person name="Hayles J."/>
            <person name="Baker S.G."/>
            <person name="Basham D."/>
            <person name="Bowman S."/>
            <person name="Brooks K."/>
            <person name="Brown D."/>
            <person name="Brown S."/>
            <person name="Chillingworth T."/>
            <person name="Churcher C.M."/>
            <person name="Collins M."/>
            <person name="Connor R."/>
            <person name="Cronin A."/>
            <person name="Davis P."/>
            <person name="Feltwell T."/>
            <person name="Fraser A."/>
            <person name="Gentles S."/>
            <person name="Goble A."/>
            <person name="Hamlin N."/>
            <person name="Harris D.E."/>
            <person name="Hidalgo J."/>
            <person name="Hodgson G."/>
            <person name="Holroyd S."/>
            <person name="Hornsby T."/>
            <person name="Howarth S."/>
            <person name="Huckle E.J."/>
            <person name="Hunt S."/>
            <person name="Jagels K."/>
            <person name="James K.D."/>
            <person name="Jones L."/>
            <person name="Jones M."/>
            <person name="Leather S."/>
            <person name="McDonald S."/>
            <person name="McLean J."/>
            <person name="Mooney P."/>
            <person name="Moule S."/>
            <person name="Mungall K.L."/>
            <person name="Murphy L.D."/>
            <person name="Niblett D."/>
            <person name="Odell C."/>
            <person name="Oliver K."/>
            <person name="O'Neil S."/>
            <person name="Pearson D."/>
            <person name="Quail M.A."/>
            <person name="Rabbinowitsch E."/>
            <person name="Rutherford K.M."/>
            <person name="Rutter S."/>
            <person name="Saunders D."/>
            <person name="Seeger K."/>
            <person name="Sharp S."/>
            <person name="Skelton J."/>
            <person name="Simmonds M.N."/>
            <person name="Squares R."/>
            <person name="Squares S."/>
            <person name="Stevens K."/>
            <person name="Taylor K."/>
            <person name="Taylor R.G."/>
            <person name="Tivey A."/>
            <person name="Walsh S.V."/>
            <person name="Warren T."/>
            <person name="Whitehead S."/>
            <person name="Woodward J.R."/>
            <person name="Volckaert G."/>
            <person name="Aert R."/>
            <person name="Robben J."/>
            <person name="Grymonprez B."/>
            <person name="Weltjens I."/>
            <person name="Vanstreels E."/>
            <person name="Rieger M."/>
            <person name="Schaefer M."/>
            <person name="Mueller-Auer S."/>
            <person name="Gabel C."/>
            <person name="Fuchs M."/>
            <person name="Duesterhoeft A."/>
            <person name="Fritzc C."/>
            <person name="Holzer E."/>
            <person name="Moestl D."/>
            <person name="Hilbert H."/>
            <person name="Borzym K."/>
            <person name="Langer I."/>
            <person name="Beck A."/>
            <person name="Lehrach H."/>
            <person name="Reinhardt R."/>
            <person name="Pohl T.M."/>
            <person name="Eger P."/>
            <person name="Zimmermann W."/>
            <person name="Wedler H."/>
            <person name="Wambutt R."/>
            <person name="Purnelle B."/>
            <person name="Goffeau A."/>
            <person name="Cadieu E."/>
            <person name="Dreano S."/>
            <person name="Gloux S."/>
            <person name="Lelaure V."/>
            <person name="Mottier S."/>
            <person name="Galibert F."/>
            <person name="Aves S.J."/>
            <person name="Xiang Z."/>
            <person name="Hunt C."/>
            <person name="Moore K."/>
            <person name="Hurst S.M."/>
            <person name="Lucas M."/>
            <person name="Rochet M."/>
            <person name="Gaillardin C."/>
            <person name="Tallada V.A."/>
            <person name="Garzon A."/>
            <person name="Thode G."/>
            <person name="Daga R.R."/>
            <person name="Cruzado L."/>
            <person name="Jimenez J."/>
            <person name="Sanchez M."/>
            <person name="del Rey F."/>
            <person name="Benito J."/>
            <person name="Dominguez A."/>
            <person name="Revuelta J.L."/>
            <person name="Moreno S."/>
            <person name="Armstrong J."/>
            <person name="Forsburg S.L."/>
            <person name="Cerutti L."/>
            <person name="Lowe T."/>
            <person name="McCombie W.R."/>
            <person name="Paulsen I."/>
            <person name="Potashkin J."/>
            <person name="Shpakovski G.V."/>
            <person name="Ussery D."/>
            <person name="Barrell B.G."/>
            <person name="Nurse P."/>
        </authorList>
    </citation>
    <scope>NUCLEOTIDE SEQUENCE [LARGE SCALE GENOMIC DNA]</scope>
    <source>
        <strain>972 / ATCC 24843</strain>
    </source>
</reference>
<reference key="3">
    <citation type="journal article" date="2008" name="J. Proteome Res.">
        <title>Phosphoproteome analysis of fission yeast.</title>
        <authorList>
            <person name="Wilson-Grady J.T."/>
            <person name="Villen J."/>
            <person name="Gygi S.P."/>
        </authorList>
    </citation>
    <scope>PHOSPHORYLATION [LARGE SCALE ANALYSIS] AT SER-930; SER-932; SER-959; SER-961; SER-964 AND SER-998</scope>
    <scope>IDENTIFICATION BY MASS SPECTROMETRY</scope>
</reference>
<evidence type="ECO:0000255" key="1"/>
<evidence type="ECO:0000256" key="2">
    <source>
        <dbReference type="SAM" id="MobiDB-lite"/>
    </source>
</evidence>
<evidence type="ECO:0000269" key="3">
    <source>
    </source>
</evidence>
<evidence type="ECO:0000269" key="4">
    <source>
    </source>
</evidence>
<evidence type="ECO:0000305" key="5"/>
<keyword id="KW-0175">Coiled coil</keyword>
<keyword id="KW-0406">Ion transport</keyword>
<keyword id="KW-0597">Phosphoprotein</keyword>
<keyword id="KW-0630">Potassium</keyword>
<keyword id="KW-0633">Potassium transport</keyword>
<keyword id="KW-1185">Reference proteome</keyword>
<keyword id="KW-0677">Repeat</keyword>
<keyword id="KW-0802">TPR repeat</keyword>
<keyword id="KW-0813">Transport</keyword>
<proteinExistence type="evidence at protein level"/>
<protein>
    <recommendedName>
        <fullName>Tetratricopeptide repeat protein 1</fullName>
    </recommendedName>
</protein>